<gene>
    <name evidence="1" type="primary">ndhI</name>
</gene>
<geneLocation type="chloroplast"/>
<sequence length="166" mass="19475">MFPMVTEFMNYGQQTVRAARYIGQGFMITLSHANRLPVTIQYPYEKLITSERFRGRIHFEFDKCIACEVCVRVCPIDLPVVDWKLETDIRKKRLLNYSIDFGICIFCGNCVEYCPTNCLSMTEEYELSTYDRHELNYNQIALGRLPMSIIDDYTIRTILNLPEIKT</sequence>
<protein>
    <recommendedName>
        <fullName evidence="1">NAD(P)H-quinone oxidoreductase subunit I, chloroplastic</fullName>
        <ecNumber evidence="1">7.1.1.-</ecNumber>
    </recommendedName>
    <alternativeName>
        <fullName evidence="1">NAD(P)H dehydrogenase subunit I</fullName>
        <shortName evidence="1">NDH subunit I</shortName>
    </alternativeName>
    <alternativeName>
        <fullName evidence="1">NADH-plastoquinone oxidoreductase subunit I</fullName>
    </alternativeName>
</protein>
<feature type="chain" id="PRO_0000250832" description="NAD(P)H-quinone oxidoreductase subunit I, chloroplastic">
    <location>
        <begin position="1"/>
        <end position="166"/>
    </location>
</feature>
<feature type="domain" description="4Fe-4S ferredoxin-type 1" evidence="1">
    <location>
        <begin position="55"/>
        <end position="84"/>
    </location>
</feature>
<feature type="domain" description="4Fe-4S ferredoxin-type 2" evidence="1">
    <location>
        <begin position="95"/>
        <end position="124"/>
    </location>
</feature>
<feature type="binding site" evidence="1">
    <location>
        <position position="64"/>
    </location>
    <ligand>
        <name>[4Fe-4S] cluster</name>
        <dbReference type="ChEBI" id="CHEBI:49883"/>
        <label>1</label>
    </ligand>
</feature>
<feature type="binding site" evidence="1">
    <location>
        <position position="67"/>
    </location>
    <ligand>
        <name>[4Fe-4S] cluster</name>
        <dbReference type="ChEBI" id="CHEBI:49883"/>
        <label>1</label>
    </ligand>
</feature>
<feature type="binding site" evidence="1">
    <location>
        <position position="70"/>
    </location>
    <ligand>
        <name>[4Fe-4S] cluster</name>
        <dbReference type="ChEBI" id="CHEBI:49883"/>
        <label>1</label>
    </ligand>
</feature>
<feature type="binding site" evidence="1">
    <location>
        <position position="74"/>
    </location>
    <ligand>
        <name>[4Fe-4S] cluster</name>
        <dbReference type="ChEBI" id="CHEBI:49883"/>
        <label>2</label>
    </ligand>
</feature>
<feature type="binding site" evidence="1">
    <location>
        <position position="104"/>
    </location>
    <ligand>
        <name>[4Fe-4S] cluster</name>
        <dbReference type="ChEBI" id="CHEBI:49883"/>
        <label>2</label>
    </ligand>
</feature>
<feature type="binding site" evidence="1">
    <location>
        <position position="107"/>
    </location>
    <ligand>
        <name>[4Fe-4S] cluster</name>
        <dbReference type="ChEBI" id="CHEBI:49883"/>
        <label>2</label>
    </ligand>
</feature>
<feature type="binding site" evidence="1">
    <location>
        <position position="110"/>
    </location>
    <ligand>
        <name>[4Fe-4S] cluster</name>
        <dbReference type="ChEBI" id="CHEBI:49883"/>
        <label>2</label>
    </ligand>
</feature>
<feature type="binding site" evidence="1">
    <location>
        <position position="114"/>
    </location>
    <ligand>
        <name>[4Fe-4S] cluster</name>
        <dbReference type="ChEBI" id="CHEBI:49883"/>
        <label>1</label>
    </ligand>
</feature>
<proteinExistence type="inferred from homology"/>
<accession>Q8HVM9</accession>
<name>NDHI_PEUSC</name>
<reference key="1">
    <citation type="submission" date="2003-01" db="EMBL/GenBank/DDBJ databases">
        <title>Chloroplast DNA phylogeny of tribe Heliantheae (Asteraceae).</title>
        <authorList>
            <person name="Panero J.L."/>
            <person name="Baldwin B.G."/>
            <person name="Schilling E.E."/>
            <person name="Clevinger J.A."/>
        </authorList>
    </citation>
    <scope>NUCLEOTIDE SEQUENCE [GENOMIC DNA]</scope>
</reference>
<keyword id="KW-0004">4Fe-4S</keyword>
<keyword id="KW-0150">Chloroplast</keyword>
<keyword id="KW-0408">Iron</keyword>
<keyword id="KW-0411">Iron-sulfur</keyword>
<keyword id="KW-0472">Membrane</keyword>
<keyword id="KW-0479">Metal-binding</keyword>
<keyword id="KW-0520">NAD</keyword>
<keyword id="KW-0521">NADP</keyword>
<keyword id="KW-0934">Plastid</keyword>
<keyword id="KW-0618">Plastoquinone</keyword>
<keyword id="KW-0874">Quinone</keyword>
<keyword id="KW-0677">Repeat</keyword>
<keyword id="KW-0793">Thylakoid</keyword>
<keyword id="KW-1278">Translocase</keyword>
<comment type="function">
    <text evidence="1">NDH shuttles electrons from NAD(P)H:plastoquinone, via FMN and iron-sulfur (Fe-S) centers, to quinones in the photosynthetic chain and possibly in a chloroplast respiratory chain. The immediate electron acceptor for the enzyme in this species is believed to be plastoquinone. Couples the redox reaction to proton translocation, and thus conserves the redox energy in a proton gradient.</text>
</comment>
<comment type="catalytic activity">
    <reaction evidence="1">
        <text>a plastoquinone + NADH + (n+1) H(+)(in) = a plastoquinol + NAD(+) + n H(+)(out)</text>
        <dbReference type="Rhea" id="RHEA:42608"/>
        <dbReference type="Rhea" id="RHEA-COMP:9561"/>
        <dbReference type="Rhea" id="RHEA-COMP:9562"/>
        <dbReference type="ChEBI" id="CHEBI:15378"/>
        <dbReference type="ChEBI" id="CHEBI:17757"/>
        <dbReference type="ChEBI" id="CHEBI:57540"/>
        <dbReference type="ChEBI" id="CHEBI:57945"/>
        <dbReference type="ChEBI" id="CHEBI:62192"/>
    </reaction>
</comment>
<comment type="catalytic activity">
    <reaction evidence="1">
        <text>a plastoquinone + NADPH + (n+1) H(+)(in) = a plastoquinol + NADP(+) + n H(+)(out)</text>
        <dbReference type="Rhea" id="RHEA:42612"/>
        <dbReference type="Rhea" id="RHEA-COMP:9561"/>
        <dbReference type="Rhea" id="RHEA-COMP:9562"/>
        <dbReference type="ChEBI" id="CHEBI:15378"/>
        <dbReference type="ChEBI" id="CHEBI:17757"/>
        <dbReference type="ChEBI" id="CHEBI:57783"/>
        <dbReference type="ChEBI" id="CHEBI:58349"/>
        <dbReference type="ChEBI" id="CHEBI:62192"/>
    </reaction>
</comment>
<comment type="cofactor">
    <cofactor evidence="1">
        <name>[4Fe-4S] cluster</name>
        <dbReference type="ChEBI" id="CHEBI:49883"/>
    </cofactor>
    <text evidence="1">Binds 2 [4Fe-4S] clusters per subunit.</text>
</comment>
<comment type="subunit">
    <text evidence="1">NDH is composed of at least 16 different subunits, 5 of which are encoded in the nucleus.</text>
</comment>
<comment type="subcellular location">
    <subcellularLocation>
        <location evidence="1">Plastid</location>
        <location evidence="1">Chloroplast thylakoid membrane</location>
        <topology evidence="1">Peripheral membrane protein</topology>
    </subcellularLocation>
</comment>
<comment type="similarity">
    <text evidence="1">Belongs to the complex I 23 kDa subunit family.</text>
</comment>
<evidence type="ECO:0000255" key="1">
    <source>
        <dbReference type="HAMAP-Rule" id="MF_01351"/>
    </source>
</evidence>
<dbReference type="EC" id="7.1.1.-" evidence="1"/>
<dbReference type="EMBL" id="AF383834">
    <property type="protein sequence ID" value="AAN61775.1"/>
    <property type="molecule type" value="Genomic_DNA"/>
</dbReference>
<dbReference type="SMR" id="Q8HVM9"/>
<dbReference type="GO" id="GO:0009535">
    <property type="term" value="C:chloroplast thylakoid membrane"/>
    <property type="evidence" value="ECO:0007669"/>
    <property type="project" value="UniProtKB-SubCell"/>
</dbReference>
<dbReference type="GO" id="GO:0051539">
    <property type="term" value="F:4 iron, 4 sulfur cluster binding"/>
    <property type="evidence" value="ECO:0007669"/>
    <property type="project" value="UniProtKB-KW"/>
</dbReference>
<dbReference type="GO" id="GO:0005506">
    <property type="term" value="F:iron ion binding"/>
    <property type="evidence" value="ECO:0007669"/>
    <property type="project" value="UniProtKB-UniRule"/>
</dbReference>
<dbReference type="GO" id="GO:0008137">
    <property type="term" value="F:NADH dehydrogenase (ubiquinone) activity"/>
    <property type="evidence" value="ECO:0007669"/>
    <property type="project" value="InterPro"/>
</dbReference>
<dbReference type="GO" id="GO:0048038">
    <property type="term" value="F:quinone binding"/>
    <property type="evidence" value="ECO:0007669"/>
    <property type="project" value="UniProtKB-KW"/>
</dbReference>
<dbReference type="GO" id="GO:0019684">
    <property type="term" value="P:photosynthesis, light reaction"/>
    <property type="evidence" value="ECO:0007669"/>
    <property type="project" value="UniProtKB-UniRule"/>
</dbReference>
<dbReference type="FunFam" id="3.30.70.3270:FF:000006">
    <property type="entry name" value="NAD(P)H-quinone oxidoreductase subunit I, chloroplastic"/>
    <property type="match status" value="1"/>
</dbReference>
<dbReference type="Gene3D" id="3.30.70.3270">
    <property type="match status" value="1"/>
</dbReference>
<dbReference type="HAMAP" id="MF_01351">
    <property type="entry name" value="NDH1_NuoI"/>
    <property type="match status" value="1"/>
</dbReference>
<dbReference type="InterPro" id="IPR017896">
    <property type="entry name" value="4Fe4S_Fe-S-bd"/>
</dbReference>
<dbReference type="InterPro" id="IPR017900">
    <property type="entry name" value="4Fe4S_Fe_S_CS"/>
</dbReference>
<dbReference type="InterPro" id="IPR010226">
    <property type="entry name" value="NADH_quinone_OxRdtase_chainI"/>
</dbReference>
<dbReference type="InterPro" id="IPR004497">
    <property type="entry name" value="NDHI"/>
</dbReference>
<dbReference type="NCBIfam" id="TIGR00403">
    <property type="entry name" value="ndhI"/>
    <property type="match status" value="1"/>
</dbReference>
<dbReference type="NCBIfam" id="TIGR01971">
    <property type="entry name" value="NuoI"/>
    <property type="match status" value="1"/>
</dbReference>
<dbReference type="NCBIfam" id="NF004537">
    <property type="entry name" value="PRK05888.1-3"/>
    <property type="match status" value="1"/>
</dbReference>
<dbReference type="PANTHER" id="PTHR47275">
    <property type="entry name" value="NAD(P)H-QUINONE OXIDOREDUCTASE SUBUNIT I, CHLOROPLASTIC"/>
    <property type="match status" value="1"/>
</dbReference>
<dbReference type="PANTHER" id="PTHR47275:SF1">
    <property type="entry name" value="NAD(P)H-QUINONE OXIDOREDUCTASE SUBUNIT I, CHLOROPLASTIC"/>
    <property type="match status" value="1"/>
</dbReference>
<dbReference type="Pfam" id="PF00037">
    <property type="entry name" value="Fer4"/>
    <property type="match status" value="2"/>
</dbReference>
<dbReference type="SUPFAM" id="SSF54862">
    <property type="entry name" value="4Fe-4S ferredoxins"/>
    <property type="match status" value="1"/>
</dbReference>
<dbReference type="PROSITE" id="PS00198">
    <property type="entry name" value="4FE4S_FER_1"/>
    <property type="match status" value="2"/>
</dbReference>
<dbReference type="PROSITE" id="PS51379">
    <property type="entry name" value="4FE4S_FER_2"/>
    <property type="match status" value="2"/>
</dbReference>
<organism>
    <name type="scientific">Peucephyllum schottii</name>
    <name type="common">Schott's pygmycedar</name>
    <dbReference type="NCBI Taxonomy" id="176567"/>
    <lineage>
        <taxon>Eukaryota</taxon>
        <taxon>Viridiplantae</taxon>
        <taxon>Streptophyta</taxon>
        <taxon>Embryophyta</taxon>
        <taxon>Tracheophyta</taxon>
        <taxon>Spermatophyta</taxon>
        <taxon>Magnoliopsida</taxon>
        <taxon>eudicotyledons</taxon>
        <taxon>Gunneridae</taxon>
        <taxon>Pentapetalae</taxon>
        <taxon>asterids</taxon>
        <taxon>campanulids</taxon>
        <taxon>Asterales</taxon>
        <taxon>Asteraceae</taxon>
        <taxon>Asteroideae</taxon>
        <taxon>Heliantheae alliance</taxon>
        <taxon>Bahieae</taxon>
        <taxon>Peucephyllum</taxon>
    </lineage>
</organism>